<accession>P23109</accession>
<accession>A8K5N4</accession>
<accession>B2RAM1</accession>
<accession>F2Z3B3</accession>
<accession>Q5TF00</accession>
<accession>Q5TF02</accession>
<proteinExistence type="evidence at protein level"/>
<gene>
    <name evidence="9" type="primary">AMPD1</name>
</gene>
<reference key="1">
    <citation type="journal article" date="1990" name="J. Biol. Chem.">
        <title>Characterization of the human and rat myoadenylate deaminase genes.</title>
        <authorList>
            <person name="Sabina R.L."/>
            <person name="Morisaki T."/>
            <person name="Clarke P."/>
            <person name="Eddy R."/>
            <person name="Shows T.B."/>
            <person name="Morton C.C."/>
            <person name="Holmes E.W."/>
        </authorList>
    </citation>
    <scope>NUCLEOTIDE SEQUENCE [GENOMIC DNA]</scope>
</reference>
<reference key="2">
    <citation type="journal article" date="2006" name="Nature">
        <title>The DNA sequence and biological annotation of human chromosome 1.</title>
        <authorList>
            <person name="Gregory S.G."/>
            <person name="Barlow K.F."/>
            <person name="McLay K.E."/>
            <person name="Kaul R."/>
            <person name="Swarbreck D."/>
            <person name="Dunham A."/>
            <person name="Scott C.E."/>
            <person name="Howe K.L."/>
            <person name="Woodfine K."/>
            <person name="Spencer C.C.A."/>
            <person name="Jones M.C."/>
            <person name="Gillson C."/>
            <person name="Searle S."/>
            <person name="Zhou Y."/>
            <person name="Kokocinski F."/>
            <person name="McDonald L."/>
            <person name="Evans R."/>
            <person name="Phillips K."/>
            <person name="Atkinson A."/>
            <person name="Cooper R."/>
            <person name="Jones C."/>
            <person name="Hall R.E."/>
            <person name="Andrews T.D."/>
            <person name="Lloyd C."/>
            <person name="Ainscough R."/>
            <person name="Almeida J.P."/>
            <person name="Ambrose K.D."/>
            <person name="Anderson F."/>
            <person name="Andrew R.W."/>
            <person name="Ashwell R.I.S."/>
            <person name="Aubin K."/>
            <person name="Babbage A.K."/>
            <person name="Bagguley C.L."/>
            <person name="Bailey J."/>
            <person name="Beasley H."/>
            <person name="Bethel G."/>
            <person name="Bird C.P."/>
            <person name="Bray-Allen S."/>
            <person name="Brown J.Y."/>
            <person name="Brown A.J."/>
            <person name="Buckley D."/>
            <person name="Burton J."/>
            <person name="Bye J."/>
            <person name="Carder C."/>
            <person name="Chapman J.C."/>
            <person name="Clark S.Y."/>
            <person name="Clarke G."/>
            <person name="Clee C."/>
            <person name="Cobley V."/>
            <person name="Collier R.E."/>
            <person name="Corby N."/>
            <person name="Coville G.J."/>
            <person name="Davies J."/>
            <person name="Deadman R."/>
            <person name="Dunn M."/>
            <person name="Earthrowl M."/>
            <person name="Ellington A.G."/>
            <person name="Errington H."/>
            <person name="Frankish A."/>
            <person name="Frankland J."/>
            <person name="French L."/>
            <person name="Garner P."/>
            <person name="Garnett J."/>
            <person name="Gay L."/>
            <person name="Ghori M.R.J."/>
            <person name="Gibson R."/>
            <person name="Gilby L.M."/>
            <person name="Gillett W."/>
            <person name="Glithero R.J."/>
            <person name="Grafham D.V."/>
            <person name="Griffiths C."/>
            <person name="Griffiths-Jones S."/>
            <person name="Grocock R."/>
            <person name="Hammond S."/>
            <person name="Harrison E.S.I."/>
            <person name="Hart E."/>
            <person name="Haugen E."/>
            <person name="Heath P.D."/>
            <person name="Holmes S."/>
            <person name="Holt K."/>
            <person name="Howden P.J."/>
            <person name="Hunt A.R."/>
            <person name="Hunt S.E."/>
            <person name="Hunter G."/>
            <person name="Isherwood J."/>
            <person name="James R."/>
            <person name="Johnson C."/>
            <person name="Johnson D."/>
            <person name="Joy A."/>
            <person name="Kay M."/>
            <person name="Kershaw J.K."/>
            <person name="Kibukawa M."/>
            <person name="Kimberley A.M."/>
            <person name="King A."/>
            <person name="Knights A.J."/>
            <person name="Lad H."/>
            <person name="Laird G."/>
            <person name="Lawlor S."/>
            <person name="Leongamornlert D.A."/>
            <person name="Lloyd D.M."/>
            <person name="Loveland J."/>
            <person name="Lovell J."/>
            <person name="Lush M.J."/>
            <person name="Lyne R."/>
            <person name="Martin S."/>
            <person name="Mashreghi-Mohammadi M."/>
            <person name="Matthews L."/>
            <person name="Matthews N.S.W."/>
            <person name="McLaren S."/>
            <person name="Milne S."/>
            <person name="Mistry S."/>
            <person name="Moore M.J.F."/>
            <person name="Nickerson T."/>
            <person name="O'Dell C.N."/>
            <person name="Oliver K."/>
            <person name="Palmeiri A."/>
            <person name="Palmer S.A."/>
            <person name="Parker A."/>
            <person name="Patel D."/>
            <person name="Pearce A.V."/>
            <person name="Peck A.I."/>
            <person name="Pelan S."/>
            <person name="Phelps K."/>
            <person name="Phillimore B.J."/>
            <person name="Plumb R."/>
            <person name="Rajan J."/>
            <person name="Raymond C."/>
            <person name="Rouse G."/>
            <person name="Saenphimmachak C."/>
            <person name="Sehra H.K."/>
            <person name="Sheridan E."/>
            <person name="Shownkeen R."/>
            <person name="Sims S."/>
            <person name="Skuce C.D."/>
            <person name="Smith M."/>
            <person name="Steward C."/>
            <person name="Subramanian S."/>
            <person name="Sycamore N."/>
            <person name="Tracey A."/>
            <person name="Tromans A."/>
            <person name="Van Helmond Z."/>
            <person name="Wall M."/>
            <person name="Wallis J.M."/>
            <person name="White S."/>
            <person name="Whitehead S.L."/>
            <person name="Wilkinson J.E."/>
            <person name="Willey D.L."/>
            <person name="Williams H."/>
            <person name="Wilming L."/>
            <person name="Wray P.W."/>
            <person name="Wu Z."/>
            <person name="Coulson A."/>
            <person name="Vaudin M."/>
            <person name="Sulston J.E."/>
            <person name="Durbin R.M."/>
            <person name="Hubbard T."/>
            <person name="Wooster R."/>
            <person name="Dunham I."/>
            <person name="Carter N.P."/>
            <person name="McVean G."/>
            <person name="Ross M.T."/>
            <person name="Harrow J."/>
            <person name="Olson M.V."/>
            <person name="Beck S."/>
            <person name="Rogers J."/>
            <person name="Bentley D.R."/>
        </authorList>
    </citation>
    <scope>NUCLEOTIDE SEQUENCE [LARGE SCALE GENOMIC DNA]</scope>
</reference>
<reference key="3">
    <citation type="submission" date="2005-07" db="EMBL/GenBank/DDBJ databases">
        <authorList>
            <person name="Mural R.J."/>
            <person name="Istrail S."/>
            <person name="Sutton G.G."/>
            <person name="Florea L."/>
            <person name="Halpern A.L."/>
            <person name="Mobarry C.M."/>
            <person name="Lippert R."/>
            <person name="Walenz B."/>
            <person name="Shatkay H."/>
            <person name="Dew I."/>
            <person name="Miller J.R."/>
            <person name="Flanigan M.J."/>
            <person name="Edwards N.J."/>
            <person name="Bolanos R."/>
            <person name="Fasulo D."/>
            <person name="Halldorsson B.V."/>
            <person name="Hannenhalli S."/>
            <person name="Turner R."/>
            <person name="Yooseph S."/>
            <person name="Lu F."/>
            <person name="Nusskern D.R."/>
            <person name="Shue B.C."/>
            <person name="Zheng X.H."/>
            <person name="Zhong F."/>
            <person name="Delcher A.L."/>
            <person name="Huson D.H."/>
            <person name="Kravitz S.A."/>
            <person name="Mouchard L."/>
            <person name="Reinert K."/>
            <person name="Remington K.A."/>
            <person name="Clark A.G."/>
            <person name="Waterman M.S."/>
            <person name="Eichler E.E."/>
            <person name="Adams M.D."/>
            <person name="Hunkapiller M.W."/>
            <person name="Myers E.W."/>
            <person name="Venter J.C."/>
        </authorList>
    </citation>
    <scope>NUCLEOTIDE SEQUENCE [LARGE SCALE GENOMIC DNA]</scope>
</reference>
<reference key="4">
    <citation type="journal article" date="1992" name="Neurology">
        <title>Molecular analysis of the myoadenylate deaminase deficiencies.</title>
        <authorList>
            <person name="Sabina R.L."/>
            <person name="Fishbein W.N."/>
            <person name="Pezeshkpour G."/>
            <person name="Clarke P.R."/>
            <person name="Holmes E.W."/>
        </authorList>
    </citation>
    <scope>NUCLEOTIDE SEQUENCE [MRNA] (ISOFORM 1)</scope>
</reference>
<reference key="5">
    <citation type="journal article" date="2004" name="Nat. Genet.">
        <title>Complete sequencing and characterization of 21,243 full-length human cDNAs.</title>
        <authorList>
            <person name="Ota T."/>
            <person name="Suzuki Y."/>
            <person name="Nishikawa T."/>
            <person name="Otsuki T."/>
            <person name="Sugiyama T."/>
            <person name="Irie R."/>
            <person name="Wakamatsu A."/>
            <person name="Hayashi K."/>
            <person name="Sato H."/>
            <person name="Nagai K."/>
            <person name="Kimura K."/>
            <person name="Makita H."/>
            <person name="Sekine M."/>
            <person name="Obayashi M."/>
            <person name="Nishi T."/>
            <person name="Shibahara T."/>
            <person name="Tanaka T."/>
            <person name="Ishii S."/>
            <person name="Yamamoto J."/>
            <person name="Saito K."/>
            <person name="Kawai Y."/>
            <person name="Isono Y."/>
            <person name="Nakamura Y."/>
            <person name="Nagahari K."/>
            <person name="Murakami K."/>
            <person name="Yasuda T."/>
            <person name="Iwayanagi T."/>
            <person name="Wagatsuma M."/>
            <person name="Shiratori A."/>
            <person name="Sudo H."/>
            <person name="Hosoiri T."/>
            <person name="Kaku Y."/>
            <person name="Kodaira H."/>
            <person name="Kondo H."/>
            <person name="Sugawara M."/>
            <person name="Takahashi M."/>
            <person name="Kanda K."/>
            <person name="Yokoi T."/>
            <person name="Furuya T."/>
            <person name="Kikkawa E."/>
            <person name="Omura Y."/>
            <person name="Abe K."/>
            <person name="Kamihara K."/>
            <person name="Katsuta N."/>
            <person name="Sato K."/>
            <person name="Tanikawa M."/>
            <person name="Yamazaki M."/>
            <person name="Ninomiya K."/>
            <person name="Ishibashi T."/>
            <person name="Yamashita H."/>
            <person name="Murakawa K."/>
            <person name="Fujimori K."/>
            <person name="Tanai H."/>
            <person name="Kimata M."/>
            <person name="Watanabe M."/>
            <person name="Hiraoka S."/>
            <person name="Chiba Y."/>
            <person name="Ishida S."/>
            <person name="Ono Y."/>
            <person name="Takiguchi S."/>
            <person name="Watanabe S."/>
            <person name="Yosida M."/>
            <person name="Hotuta T."/>
            <person name="Kusano J."/>
            <person name="Kanehori K."/>
            <person name="Takahashi-Fujii A."/>
            <person name="Hara H."/>
            <person name="Tanase T.-O."/>
            <person name="Nomura Y."/>
            <person name="Togiya S."/>
            <person name="Komai F."/>
            <person name="Hara R."/>
            <person name="Takeuchi K."/>
            <person name="Arita M."/>
            <person name="Imose N."/>
            <person name="Musashino K."/>
            <person name="Yuuki H."/>
            <person name="Oshima A."/>
            <person name="Sasaki N."/>
            <person name="Aotsuka S."/>
            <person name="Yoshikawa Y."/>
            <person name="Matsunawa H."/>
            <person name="Ichihara T."/>
            <person name="Shiohata N."/>
            <person name="Sano S."/>
            <person name="Moriya S."/>
            <person name="Momiyama H."/>
            <person name="Satoh N."/>
            <person name="Takami S."/>
            <person name="Terashima Y."/>
            <person name="Suzuki O."/>
            <person name="Nakagawa S."/>
            <person name="Senoh A."/>
            <person name="Mizoguchi H."/>
            <person name="Goto Y."/>
            <person name="Shimizu F."/>
            <person name="Wakebe H."/>
            <person name="Hishigaki H."/>
            <person name="Watanabe T."/>
            <person name="Sugiyama A."/>
            <person name="Takemoto M."/>
            <person name="Kawakami B."/>
            <person name="Yamazaki M."/>
            <person name="Watanabe K."/>
            <person name="Kumagai A."/>
            <person name="Itakura S."/>
            <person name="Fukuzumi Y."/>
            <person name="Fujimori Y."/>
            <person name="Komiyama M."/>
            <person name="Tashiro H."/>
            <person name="Tanigami A."/>
            <person name="Fujiwara T."/>
            <person name="Ono T."/>
            <person name="Yamada K."/>
            <person name="Fujii Y."/>
            <person name="Ozaki K."/>
            <person name="Hirao M."/>
            <person name="Ohmori Y."/>
            <person name="Kawabata A."/>
            <person name="Hikiji T."/>
            <person name="Kobatake N."/>
            <person name="Inagaki H."/>
            <person name="Ikema Y."/>
            <person name="Okamoto S."/>
            <person name="Okitani R."/>
            <person name="Kawakami T."/>
            <person name="Noguchi S."/>
            <person name="Itoh T."/>
            <person name="Shigeta K."/>
            <person name="Senba T."/>
            <person name="Matsumura K."/>
            <person name="Nakajima Y."/>
            <person name="Mizuno T."/>
            <person name="Morinaga M."/>
            <person name="Sasaki M."/>
            <person name="Togashi T."/>
            <person name="Oyama M."/>
            <person name="Hata H."/>
            <person name="Watanabe M."/>
            <person name="Komatsu T."/>
            <person name="Mizushima-Sugano J."/>
            <person name="Satoh T."/>
            <person name="Shirai Y."/>
            <person name="Takahashi Y."/>
            <person name="Nakagawa K."/>
            <person name="Okumura K."/>
            <person name="Nagase T."/>
            <person name="Nomura N."/>
            <person name="Kikuchi H."/>
            <person name="Masuho Y."/>
            <person name="Yamashita R."/>
            <person name="Nakai K."/>
            <person name="Yada T."/>
            <person name="Nakamura Y."/>
            <person name="Ohara O."/>
            <person name="Isogai T."/>
            <person name="Sugano S."/>
        </authorList>
    </citation>
    <scope>NUCLEOTIDE SEQUENCE [LARGE SCALE MRNA] (ISOFORM 1)</scope>
    <source>
        <tissue>Pericardium</tissue>
        <tissue>Tongue</tissue>
    </source>
</reference>
<reference key="6">
    <citation type="journal article" date="1992" name="Proc. Natl. Acad. Sci. U.S.A.">
        <title>Molecular basis of AMP deaminase deficiency in skeletal muscle.</title>
        <authorList>
            <person name="Morisaki T."/>
            <person name="Gross M."/>
            <person name="Morisaki H."/>
            <person name="Pongratz D."/>
            <person name="Zoellner N."/>
            <person name="Holmes E.W."/>
        </authorList>
    </citation>
    <scope>VARIANT LEU-48</scope>
</reference>
<reference key="7">
    <citation type="journal article" date="2000" name="Hum. Mutat.">
        <title>First missense mutations (R388W and R425H) of AMPD1 accompanied with myopathy found in a Japanese patient.</title>
        <authorList>
            <person name="Morisaki H."/>
            <person name="Higuchi I."/>
            <person name="Abe M."/>
            <person name="Osame M."/>
            <person name="Morisaki T."/>
        </authorList>
    </citation>
    <scope>VARIANTS MMDD TRP-388 AND HIS-425</scope>
    <scope>CHARACTERIZATION OF VARIANTS MMDD TRP-388 AND HIS-425</scope>
    <scope>FUNCTION</scope>
    <scope>CATALYTIC ACTIVITY</scope>
    <scope>PATHWAY</scope>
</reference>
<reference key="8">
    <citation type="journal article" date="2006" name="Science">
        <title>The consensus coding sequences of human breast and colorectal cancers.</title>
        <authorList>
            <person name="Sjoeblom T."/>
            <person name="Jones S."/>
            <person name="Wood L.D."/>
            <person name="Parsons D.W."/>
            <person name="Lin J."/>
            <person name="Barber T.D."/>
            <person name="Mandelker D."/>
            <person name="Leary R.J."/>
            <person name="Ptak J."/>
            <person name="Silliman N."/>
            <person name="Szabo S."/>
            <person name="Buckhaults P."/>
            <person name="Farrell C."/>
            <person name="Meeh P."/>
            <person name="Markowitz S.D."/>
            <person name="Willis J."/>
            <person name="Dawson D."/>
            <person name="Willson J.K.V."/>
            <person name="Gazdar A.F."/>
            <person name="Hartigan J."/>
            <person name="Wu L."/>
            <person name="Liu C."/>
            <person name="Parmigiani G."/>
            <person name="Park B.H."/>
            <person name="Bachman K.E."/>
            <person name="Papadopoulos N."/>
            <person name="Vogelstein B."/>
            <person name="Kinzler K.W."/>
            <person name="Velculescu V.E."/>
        </authorList>
    </citation>
    <scope>VARIANT [LARGE SCALE ANALYSIS] HIS-633</scope>
</reference>
<organism>
    <name type="scientific">Homo sapiens</name>
    <name type="common">Human</name>
    <dbReference type="NCBI Taxonomy" id="9606"/>
    <lineage>
        <taxon>Eukaryota</taxon>
        <taxon>Metazoa</taxon>
        <taxon>Chordata</taxon>
        <taxon>Craniata</taxon>
        <taxon>Vertebrata</taxon>
        <taxon>Euteleostomi</taxon>
        <taxon>Mammalia</taxon>
        <taxon>Eutheria</taxon>
        <taxon>Euarchontoglires</taxon>
        <taxon>Primates</taxon>
        <taxon>Haplorrhini</taxon>
        <taxon>Catarrhini</taxon>
        <taxon>Hominidae</taxon>
        <taxon>Homo</taxon>
    </lineage>
</organism>
<feature type="chain" id="PRO_0000194403" description="AMP deaminase 1">
    <location>
        <begin position="1"/>
        <end position="747"/>
    </location>
</feature>
<feature type="active site" description="Proton acceptor" evidence="3">
    <location>
        <position position="594"/>
    </location>
</feature>
<feature type="binding site" evidence="1">
    <location>
        <position position="303"/>
    </location>
    <ligand>
        <name>Zn(2+)</name>
        <dbReference type="ChEBI" id="CHEBI:29105"/>
        <note>catalytic</note>
    </ligand>
</feature>
<feature type="binding site" evidence="1">
    <location>
        <position position="305"/>
    </location>
    <ligand>
        <name>substrate</name>
    </ligand>
</feature>
<feature type="binding site" evidence="1">
    <location>
        <position position="305"/>
    </location>
    <ligand>
        <name>Zn(2+)</name>
        <dbReference type="ChEBI" id="CHEBI:29105"/>
        <note>catalytic</note>
    </ligand>
</feature>
<feature type="binding site" evidence="1">
    <location>
        <begin position="374"/>
        <end position="379"/>
    </location>
    <ligand>
        <name>substrate</name>
    </ligand>
</feature>
<feature type="binding site" evidence="1">
    <location>
        <position position="572"/>
    </location>
    <ligand>
        <name>Zn(2+)</name>
        <dbReference type="ChEBI" id="CHEBI:29105"/>
        <note>catalytic</note>
    </ligand>
</feature>
<feature type="binding site" evidence="1">
    <location>
        <position position="575"/>
    </location>
    <ligand>
        <name>substrate</name>
    </ligand>
</feature>
<feature type="binding site" evidence="1">
    <location>
        <position position="649"/>
    </location>
    <ligand>
        <name>Zn(2+)</name>
        <dbReference type="ChEBI" id="CHEBI:29105"/>
        <note>catalytic</note>
    </ligand>
</feature>
<feature type="binding site" evidence="1">
    <location>
        <begin position="650"/>
        <end position="653"/>
    </location>
    <ligand>
        <name>substrate</name>
    </ligand>
</feature>
<feature type="modified residue" description="Phosphothreonine" evidence="2">
    <location>
        <position position="81"/>
    </location>
</feature>
<feature type="modified residue" description="Phosphoserine" evidence="2">
    <location>
        <position position="85"/>
    </location>
</feature>
<feature type="modified residue" description="Phosphotyrosine" evidence="2">
    <location>
        <position position="216"/>
    </location>
</feature>
<feature type="modified residue" description="Phosphoserine" evidence="2">
    <location>
        <position position="441"/>
    </location>
</feature>
<feature type="splice variant" id="VSP_042638" description="In isoform 2." evidence="7">
    <original>AEEKQ</original>
    <variation>E</variation>
    <location>
        <begin position="8"/>
        <end position="12"/>
    </location>
</feature>
<feature type="sequence variant" id="VAR_048860" description="In dbSNP:rs2273268.">
    <original>E</original>
    <variation>K</variation>
    <location>
        <position position="22"/>
    </location>
</feature>
<feature type="sequence variant" id="VAR_013270" description="Activity comparable to wild-type; dbSNP:rs61752479." evidence="5">
    <original>P</original>
    <variation>L</variation>
    <location>
        <position position="48"/>
    </location>
</feature>
<feature type="sequence variant" id="VAR_013271" description="In MMDD; loss of AMP deaminase activity; dbSNP:rs35859650." evidence="4">
    <original>R</original>
    <variation>W</variation>
    <location>
        <position position="388"/>
    </location>
</feature>
<feature type="sequence variant" id="VAR_013272" description="In MMDD; loss of AMP deaminase activity; dbSNP:rs121912682." evidence="4">
    <original>R</original>
    <variation>H</variation>
    <location>
        <position position="425"/>
    </location>
</feature>
<feature type="sequence variant" id="VAR_035801" description="In a colorectal cancer sample; somatic mutation." evidence="6">
    <original>P</original>
    <variation>H</variation>
    <location>
        <position position="633"/>
    </location>
</feature>
<feature type="sequence conflict" description="In Ref. 5; BAF84038." evidence="7" ref="5">
    <original>P</original>
    <variation>S</variation>
    <location>
        <position position="201"/>
    </location>
</feature>
<feature type="sequence conflict" description="In Ref. 5; BAF84038." evidence="7" ref="5">
    <original>V</original>
    <variation>A</variation>
    <location>
        <position position="273"/>
    </location>
</feature>
<feature type="sequence conflict" description="In Ref. 5; BAG36918." evidence="7" ref="5">
    <original>D</original>
    <variation>G</variation>
    <location>
        <position position="434"/>
    </location>
</feature>
<feature type="sequence conflict" description="In Ref. 5; BAF84038." evidence="7" ref="5">
    <original>W</original>
    <variation>R</variation>
    <location>
        <position position="442"/>
    </location>
</feature>
<feature type="sequence conflict" description="In Ref. 5; BAF84038." evidence="7" ref="5">
    <original>F</original>
    <variation>S</variation>
    <location>
        <position position="626"/>
    </location>
</feature>
<comment type="function">
    <text evidence="4">AMP deaminase plays a critical role in energy metabolism.</text>
</comment>
<comment type="catalytic activity">
    <reaction evidence="4">
        <text>AMP + H2O + H(+) = IMP + NH4(+)</text>
        <dbReference type="Rhea" id="RHEA:14777"/>
        <dbReference type="ChEBI" id="CHEBI:15377"/>
        <dbReference type="ChEBI" id="CHEBI:15378"/>
        <dbReference type="ChEBI" id="CHEBI:28938"/>
        <dbReference type="ChEBI" id="CHEBI:58053"/>
        <dbReference type="ChEBI" id="CHEBI:456215"/>
        <dbReference type="EC" id="3.5.4.6"/>
    </reaction>
    <physiologicalReaction direction="left-to-right" evidence="4">
        <dbReference type="Rhea" id="RHEA:14778"/>
    </physiologicalReaction>
</comment>
<comment type="cofactor">
    <cofactor evidence="1">
        <name>Zn(2+)</name>
        <dbReference type="ChEBI" id="CHEBI:29105"/>
    </cofactor>
    <text evidence="1">Binds 1 zinc ion per subunit.</text>
</comment>
<comment type="pathway">
    <text evidence="4">Purine metabolism; IMP biosynthesis via salvage pathway; IMP from AMP: step 1/1.</text>
</comment>
<comment type="subunit">
    <text>Homotetramer.</text>
</comment>
<comment type="interaction">
    <interactant intactId="EBI-2959675">
        <id>P23109</id>
    </interactant>
    <interactant intactId="EBI-2959675">
        <id>P23109</id>
        <label>AMPD1</label>
    </interactant>
    <organismsDiffer>false</organismsDiffer>
    <experiments>3</experiments>
</comment>
<comment type="interaction">
    <interactant intactId="EBI-2959675">
        <id>P23109</id>
    </interactant>
    <interactant intactId="EBI-11957578">
        <id>Q01433-2</id>
        <label>AMPD2</label>
    </interactant>
    <organismsDiffer>false</organismsDiffer>
    <experiments>3</experiments>
</comment>
<comment type="interaction">
    <interactant intactId="EBI-2959675">
        <id>P23109</id>
    </interactant>
    <interactant intactId="EBI-11955621">
        <id>Q01432-4</id>
        <label>AMPD3</label>
    </interactant>
    <organismsDiffer>false</organismsDiffer>
    <experiments>3</experiments>
</comment>
<comment type="alternative products">
    <event type="alternative splicing"/>
    <isoform>
        <id>P23109-1</id>
        <name>1</name>
        <sequence type="displayed"/>
    </isoform>
    <isoform>
        <id>P23109-2</id>
        <name>2</name>
        <sequence type="described" ref="VSP_042638"/>
    </isoform>
</comment>
<comment type="disease" evidence="4">
    <disease id="DI-00039">
        <name>Myopathy due to myoadenylate deaminase deficiency</name>
        <acronym>MMDD</acronym>
        <description>A metabolic disorder resulting in exercise-related myopathy. It is characterized by exercise-induced muscle aches, cramps, and early fatigue.</description>
        <dbReference type="MIM" id="615511"/>
    </disease>
    <text>The disease is caused by variants affecting the gene represented in this entry.</text>
</comment>
<comment type="similarity">
    <text evidence="7">Belongs to the metallo-dependent hydrolases superfamily. Adenosine and AMP deaminases family.</text>
</comment>
<evidence type="ECO:0000250" key="1"/>
<evidence type="ECO:0000250" key="2">
    <source>
        <dbReference type="UniProtKB" id="P10759"/>
    </source>
</evidence>
<evidence type="ECO:0000255" key="3">
    <source>
        <dbReference type="PROSITE-ProRule" id="PRU10104"/>
    </source>
</evidence>
<evidence type="ECO:0000269" key="4">
    <source>
    </source>
</evidence>
<evidence type="ECO:0000269" key="5">
    <source>
    </source>
</evidence>
<evidence type="ECO:0000269" key="6">
    <source>
    </source>
</evidence>
<evidence type="ECO:0000305" key="7"/>
<evidence type="ECO:0000305" key="8">
    <source>
    </source>
</evidence>
<evidence type="ECO:0000312" key="9">
    <source>
        <dbReference type="HGNC" id="HGNC:468"/>
    </source>
</evidence>
<name>AMPD1_HUMAN</name>
<dbReference type="EC" id="3.5.4.6" evidence="4"/>
<dbReference type="EMBL" id="M37931">
    <property type="protein sequence ID" value="AAG24258.1"/>
    <property type="molecule type" value="Genomic_DNA"/>
</dbReference>
<dbReference type="EMBL" id="M37920">
    <property type="protein sequence ID" value="AAG24258.1"/>
    <property type="status" value="JOINED"/>
    <property type="molecule type" value="Genomic_DNA"/>
</dbReference>
<dbReference type="EMBL" id="M37921">
    <property type="protein sequence ID" value="AAG24258.1"/>
    <property type="status" value="JOINED"/>
    <property type="molecule type" value="Genomic_DNA"/>
</dbReference>
<dbReference type="EMBL" id="M37922">
    <property type="protein sequence ID" value="AAG24258.1"/>
    <property type="status" value="JOINED"/>
    <property type="molecule type" value="Genomic_DNA"/>
</dbReference>
<dbReference type="EMBL" id="M37923">
    <property type="protein sequence ID" value="AAG24258.1"/>
    <property type="status" value="JOINED"/>
    <property type="molecule type" value="Genomic_DNA"/>
</dbReference>
<dbReference type="EMBL" id="M37924">
    <property type="protein sequence ID" value="AAG24258.1"/>
    <property type="status" value="JOINED"/>
    <property type="molecule type" value="Genomic_DNA"/>
</dbReference>
<dbReference type="EMBL" id="M37927">
    <property type="protein sequence ID" value="AAG24258.1"/>
    <property type="status" value="JOINED"/>
    <property type="molecule type" value="Genomic_DNA"/>
</dbReference>
<dbReference type="EMBL" id="M37928">
    <property type="protein sequence ID" value="AAG24258.1"/>
    <property type="status" value="JOINED"/>
    <property type="molecule type" value="Genomic_DNA"/>
</dbReference>
<dbReference type="EMBL" id="M37929">
    <property type="protein sequence ID" value="AAG24258.1"/>
    <property type="status" value="JOINED"/>
    <property type="molecule type" value="Genomic_DNA"/>
</dbReference>
<dbReference type="EMBL" id="M37930">
    <property type="protein sequence ID" value="AAG24258.1"/>
    <property type="status" value="JOINED"/>
    <property type="molecule type" value="Genomic_DNA"/>
</dbReference>
<dbReference type="EMBL" id="AL096773">
    <property type="status" value="NOT_ANNOTATED_CDS"/>
    <property type="molecule type" value="Genomic_DNA"/>
</dbReference>
<dbReference type="EMBL" id="CH471122">
    <property type="protein sequence ID" value="EAW56607.1"/>
    <property type="molecule type" value="Genomic_DNA"/>
</dbReference>
<dbReference type="EMBL" id="M60092">
    <property type="protein sequence ID" value="AAA57281.1"/>
    <property type="molecule type" value="mRNA"/>
</dbReference>
<dbReference type="EMBL" id="AK314252">
    <property type="protein sequence ID" value="BAG36918.1"/>
    <property type="molecule type" value="mRNA"/>
</dbReference>
<dbReference type="EMBL" id="AK291349">
    <property type="protein sequence ID" value="BAF84038.1"/>
    <property type="molecule type" value="mRNA"/>
</dbReference>
<dbReference type="CCDS" id="CCDS53349.2">
    <molecule id="P23109-2"/>
</dbReference>
<dbReference type="CCDS" id="CCDS876.3">
    <molecule id="P23109-1"/>
</dbReference>
<dbReference type="PIR" id="I39444">
    <property type="entry name" value="I39444"/>
</dbReference>
<dbReference type="RefSeq" id="NP_000027.3">
    <molecule id="P23109-1"/>
    <property type="nucleotide sequence ID" value="NM_000036.3"/>
</dbReference>
<dbReference type="RefSeq" id="NP_001166097.2">
    <molecule id="P23109-2"/>
    <property type="nucleotide sequence ID" value="NM_001172626.2"/>
</dbReference>
<dbReference type="SMR" id="P23109"/>
<dbReference type="BioGRID" id="106767">
    <property type="interactions" value="13"/>
</dbReference>
<dbReference type="FunCoup" id="P23109">
    <property type="interactions" value="210"/>
</dbReference>
<dbReference type="IntAct" id="P23109">
    <property type="interactions" value="11"/>
</dbReference>
<dbReference type="STRING" id="9606.ENSP00000430075"/>
<dbReference type="BindingDB" id="P23109"/>
<dbReference type="ChEMBL" id="CHEMBL2869"/>
<dbReference type="DrugBank" id="DB00131">
    <property type="generic name" value="Adenosine phosphate"/>
</dbReference>
<dbReference type="GlyGen" id="P23109">
    <property type="glycosylation" value="1 site, 1 O-linked glycan (1 site)"/>
</dbReference>
<dbReference type="iPTMnet" id="P23109"/>
<dbReference type="PhosphoSitePlus" id="P23109"/>
<dbReference type="BioMuta" id="AMPD1"/>
<dbReference type="DMDM" id="384872309"/>
<dbReference type="CPTAC" id="CPTAC-1752"/>
<dbReference type="CPTAC" id="CPTAC-1753"/>
<dbReference type="jPOST" id="P23109"/>
<dbReference type="MassIVE" id="P23109"/>
<dbReference type="PaxDb" id="9606-ENSP00000430075"/>
<dbReference type="PeptideAtlas" id="P23109"/>
<dbReference type="ProteomicsDB" id="54053">
    <molecule id="P23109-1"/>
</dbReference>
<dbReference type="ProteomicsDB" id="54054">
    <molecule id="P23109-2"/>
</dbReference>
<dbReference type="Antibodypedia" id="33863">
    <property type="antibodies" value="250 antibodies from 31 providers"/>
</dbReference>
<dbReference type="DNASU" id="270"/>
<dbReference type="Ensembl" id="ENST00000369538.4">
    <molecule id="P23109-2"/>
    <property type="protein sequence ID" value="ENSP00000358551.4"/>
    <property type="gene ID" value="ENSG00000116748.22"/>
</dbReference>
<dbReference type="Ensembl" id="ENST00000520113.7">
    <molecule id="P23109-1"/>
    <property type="protein sequence ID" value="ENSP00000430075.3"/>
    <property type="gene ID" value="ENSG00000116748.22"/>
</dbReference>
<dbReference type="GeneID" id="270"/>
<dbReference type="KEGG" id="hsa:270"/>
<dbReference type="MANE-Select" id="ENST00000520113.7">
    <property type="protein sequence ID" value="ENSP00000430075.3"/>
    <property type="RefSeq nucleotide sequence ID" value="NM_000036.3"/>
    <property type="RefSeq protein sequence ID" value="NP_000027.3"/>
</dbReference>
<dbReference type="UCSC" id="uc001efe.3">
    <molecule id="P23109-1"/>
    <property type="organism name" value="human"/>
</dbReference>
<dbReference type="AGR" id="HGNC:468"/>
<dbReference type="CTD" id="270"/>
<dbReference type="DisGeNET" id="270"/>
<dbReference type="GeneCards" id="AMPD1"/>
<dbReference type="HGNC" id="HGNC:468">
    <property type="gene designation" value="AMPD1"/>
</dbReference>
<dbReference type="HPA" id="ENSG00000116748">
    <property type="expression patterns" value="Group enriched (skeletal muscle, tongue)"/>
</dbReference>
<dbReference type="MalaCards" id="AMPD1"/>
<dbReference type="MIM" id="102770">
    <property type="type" value="gene"/>
</dbReference>
<dbReference type="MIM" id="615511">
    <property type="type" value="phenotype"/>
</dbReference>
<dbReference type="neXtProt" id="NX_P23109"/>
<dbReference type="OpenTargets" id="ENSG00000116748"/>
<dbReference type="Orphanet" id="45">
    <property type="disease" value="Adenosine monophosphate deaminase deficiency"/>
</dbReference>
<dbReference type="PharmGKB" id="PA24776"/>
<dbReference type="VEuPathDB" id="HostDB:ENSG00000116748"/>
<dbReference type="eggNOG" id="KOG1096">
    <property type="taxonomic scope" value="Eukaryota"/>
</dbReference>
<dbReference type="GeneTree" id="ENSGT00950000183011"/>
<dbReference type="HOGENOM" id="CLU_003782_4_0_1"/>
<dbReference type="InParanoid" id="P23109"/>
<dbReference type="OrthoDB" id="1723809at2759"/>
<dbReference type="PAN-GO" id="P23109">
    <property type="GO annotations" value="4 GO annotations based on evolutionary models"/>
</dbReference>
<dbReference type="PhylomeDB" id="P23109"/>
<dbReference type="TreeFam" id="TF300439"/>
<dbReference type="BRENDA" id="3.5.4.6">
    <property type="organism ID" value="2681"/>
</dbReference>
<dbReference type="PathwayCommons" id="P23109"/>
<dbReference type="Reactome" id="R-HSA-74217">
    <property type="pathway name" value="Purine salvage"/>
</dbReference>
<dbReference type="SABIO-RK" id="P23109"/>
<dbReference type="SignaLink" id="P23109"/>
<dbReference type="SIGNOR" id="P23109"/>
<dbReference type="UniPathway" id="UPA00591">
    <property type="reaction ID" value="UER00663"/>
</dbReference>
<dbReference type="BioGRID-ORCS" id="270">
    <property type="hits" value="14 hits in 1151 CRISPR screens"/>
</dbReference>
<dbReference type="ChiTaRS" id="AMPD1">
    <property type="organism name" value="human"/>
</dbReference>
<dbReference type="GeneWiki" id="AMP_deaminase"/>
<dbReference type="GenomeRNAi" id="270"/>
<dbReference type="Pharos" id="P23109">
    <property type="development level" value="Tchem"/>
</dbReference>
<dbReference type="PRO" id="PR:P23109"/>
<dbReference type="Proteomes" id="UP000005640">
    <property type="component" value="Chromosome 1"/>
</dbReference>
<dbReference type="RNAct" id="P23109">
    <property type="molecule type" value="protein"/>
</dbReference>
<dbReference type="Bgee" id="ENSG00000116748">
    <property type="expression patterns" value="Expressed in triceps brachii and 122 other cell types or tissues"/>
</dbReference>
<dbReference type="ExpressionAtlas" id="P23109">
    <property type="expression patterns" value="baseline and differential"/>
</dbReference>
<dbReference type="GO" id="GO:0005829">
    <property type="term" value="C:cytosol"/>
    <property type="evidence" value="ECO:0000318"/>
    <property type="project" value="GO_Central"/>
</dbReference>
<dbReference type="GO" id="GO:0003876">
    <property type="term" value="F:AMP deaminase activity"/>
    <property type="evidence" value="ECO:0000315"/>
    <property type="project" value="UniProtKB"/>
</dbReference>
<dbReference type="GO" id="GO:0042802">
    <property type="term" value="F:identical protein binding"/>
    <property type="evidence" value="ECO:0000353"/>
    <property type="project" value="IntAct"/>
</dbReference>
<dbReference type="GO" id="GO:0046872">
    <property type="term" value="F:metal ion binding"/>
    <property type="evidence" value="ECO:0007669"/>
    <property type="project" value="UniProtKB-KW"/>
</dbReference>
<dbReference type="GO" id="GO:0046033">
    <property type="term" value="P:AMP metabolic process"/>
    <property type="evidence" value="ECO:0000318"/>
    <property type="project" value="GO_Central"/>
</dbReference>
<dbReference type="GO" id="GO:0032263">
    <property type="term" value="P:GMP salvage"/>
    <property type="evidence" value="ECO:0000314"/>
    <property type="project" value="MGI"/>
</dbReference>
<dbReference type="GO" id="GO:0006188">
    <property type="term" value="P:IMP biosynthetic process"/>
    <property type="evidence" value="ECO:0000318"/>
    <property type="project" value="GO_Central"/>
</dbReference>
<dbReference type="GO" id="GO:0032264">
    <property type="term" value="P:IMP salvage"/>
    <property type="evidence" value="ECO:0007669"/>
    <property type="project" value="UniProtKB-UniPathway"/>
</dbReference>
<dbReference type="CDD" id="cd01319">
    <property type="entry name" value="AMPD"/>
    <property type="match status" value="1"/>
</dbReference>
<dbReference type="FunFam" id="4.10.800.20:FF:000001">
    <property type="entry name" value="AMP deaminase"/>
    <property type="match status" value="1"/>
</dbReference>
<dbReference type="Gene3D" id="4.10.800.20">
    <property type="match status" value="1"/>
</dbReference>
<dbReference type="Gene3D" id="3.20.20.140">
    <property type="entry name" value="Metal-dependent hydrolases"/>
    <property type="match status" value="1"/>
</dbReference>
<dbReference type="InterPro" id="IPR006650">
    <property type="entry name" value="A/AMP_deam_AS"/>
</dbReference>
<dbReference type="InterPro" id="IPR006329">
    <property type="entry name" value="AMPD"/>
</dbReference>
<dbReference type="InterPro" id="IPR032466">
    <property type="entry name" value="Metal_Hydrolase"/>
</dbReference>
<dbReference type="NCBIfam" id="TIGR01429">
    <property type="entry name" value="AMP_deaminase"/>
    <property type="match status" value="1"/>
</dbReference>
<dbReference type="PANTHER" id="PTHR11359">
    <property type="entry name" value="AMP DEAMINASE"/>
    <property type="match status" value="1"/>
</dbReference>
<dbReference type="PANTHER" id="PTHR11359:SF1">
    <property type="entry name" value="AMP DEAMINASE 1"/>
    <property type="match status" value="1"/>
</dbReference>
<dbReference type="Pfam" id="PF19326">
    <property type="entry name" value="AMP_deaminase"/>
    <property type="match status" value="1"/>
</dbReference>
<dbReference type="PIRSF" id="PIRSF001251">
    <property type="entry name" value="AMP_deaminase_met"/>
    <property type="match status" value="1"/>
</dbReference>
<dbReference type="SUPFAM" id="SSF51556">
    <property type="entry name" value="Metallo-dependent hydrolases"/>
    <property type="match status" value="1"/>
</dbReference>
<dbReference type="PROSITE" id="PS00485">
    <property type="entry name" value="A_DEAMINASE"/>
    <property type="match status" value="1"/>
</dbReference>
<protein>
    <recommendedName>
        <fullName evidence="8">AMP deaminase 1</fullName>
        <ecNumber evidence="4">3.5.4.6</ecNumber>
    </recommendedName>
    <alternativeName>
        <fullName>AMP deaminase isoform M</fullName>
    </alternativeName>
    <alternativeName>
        <fullName>Myoadenylate deaminase</fullName>
    </alternativeName>
</protein>
<keyword id="KW-0025">Alternative splicing</keyword>
<keyword id="KW-0225">Disease variant</keyword>
<keyword id="KW-0378">Hydrolase</keyword>
<keyword id="KW-0479">Metal-binding</keyword>
<keyword id="KW-0546">Nucleotide metabolism</keyword>
<keyword id="KW-0597">Phosphoprotein</keyword>
<keyword id="KW-1267">Proteomics identification</keyword>
<keyword id="KW-1185">Reference proteome</keyword>
<keyword id="KW-0862">Zinc</keyword>
<sequence length="747" mass="86490">MPLFKLPAEEKQIDDAMRNFAEKVFASEVKDEGGRQEISPFDVDEICPISHHEMQAHIFHLETLSTSTEARRKKRFQGRKTVNLSIPLSETSSTKLSHIDEYISSSPTYQTVPDFQRVQITGDYASGVTVEDFEIVCKGLYRALCIREKYMQKSFQRFPKTPSKYLRNIDGEAWVANESFYPVFTPPVKKGEDPFRTDNLPENLGYHLKMKDGVVYVYPNEAAVSKDEPKPLPYPNLDTFLDDMNFLLALIAQGPVKTYTHRRLKFLSSKFQVHQMLNEMDELKELKNNPHRDFYNCRKVDTHIHAAACMNQKHLLRFIKKSYQIDADRVVYSTKEKNLTLKELFAKLKMHPYDLTVDSLDVHAGRQTFQRFDKFNDKYNPVGASELRDLYLKTDNYINGEYFATIIKEVGADLVEAKYQHAEPRLSIYGRSPDEWSKLSSWFVCNRIHCPNMTWMIQVPRIYDVFRSKNFLPHFGKMLENIFMPVFEATINPQADPELSVFLKHITGFDSVDDESKHSGHMFSSKSPKPQEWTLEKNPSYTYYAYYMYANIMVLNSLRKERGMNTFLFRPHCGEAGALTHLMTAFMIADDISHGLNLKKSPVLQYLFFLAQIPIAMSPLSNNSLFLEYAKNPFLDFLQKGLMISLSTDDPMQFHFTKEPLMEEYAIAAQVFKLSTCDMCEVARNSVLQCGISHEEKVKFLGDNYLEEGPAGNDIRRTNVAQIRMAYRYETWCYELNLIAEGLKSTE</sequence>